<reference key="1">
    <citation type="journal article" date="2000" name="Nature">
        <title>Sequence and analysis of chromosome 3 of the plant Arabidopsis thaliana.</title>
        <authorList>
            <person name="Salanoubat M."/>
            <person name="Lemcke K."/>
            <person name="Rieger M."/>
            <person name="Ansorge W."/>
            <person name="Unseld M."/>
            <person name="Fartmann B."/>
            <person name="Valle G."/>
            <person name="Bloecker H."/>
            <person name="Perez-Alonso M."/>
            <person name="Obermaier B."/>
            <person name="Delseny M."/>
            <person name="Boutry M."/>
            <person name="Grivell L.A."/>
            <person name="Mache R."/>
            <person name="Puigdomenech P."/>
            <person name="De Simone V."/>
            <person name="Choisne N."/>
            <person name="Artiguenave F."/>
            <person name="Robert C."/>
            <person name="Brottier P."/>
            <person name="Wincker P."/>
            <person name="Cattolico L."/>
            <person name="Weissenbach J."/>
            <person name="Saurin W."/>
            <person name="Quetier F."/>
            <person name="Schaefer M."/>
            <person name="Mueller-Auer S."/>
            <person name="Gabel C."/>
            <person name="Fuchs M."/>
            <person name="Benes V."/>
            <person name="Wurmbach E."/>
            <person name="Drzonek H."/>
            <person name="Erfle H."/>
            <person name="Jordan N."/>
            <person name="Bangert S."/>
            <person name="Wiedelmann R."/>
            <person name="Kranz H."/>
            <person name="Voss H."/>
            <person name="Holland R."/>
            <person name="Brandt P."/>
            <person name="Nyakatura G."/>
            <person name="Vezzi A."/>
            <person name="D'Angelo M."/>
            <person name="Pallavicini A."/>
            <person name="Toppo S."/>
            <person name="Simionati B."/>
            <person name="Conrad A."/>
            <person name="Hornischer K."/>
            <person name="Kauer G."/>
            <person name="Loehnert T.-H."/>
            <person name="Nordsiek G."/>
            <person name="Reichelt J."/>
            <person name="Scharfe M."/>
            <person name="Schoen O."/>
            <person name="Bargues M."/>
            <person name="Terol J."/>
            <person name="Climent J."/>
            <person name="Navarro P."/>
            <person name="Collado C."/>
            <person name="Perez-Perez A."/>
            <person name="Ottenwaelder B."/>
            <person name="Duchemin D."/>
            <person name="Cooke R."/>
            <person name="Laudie M."/>
            <person name="Berger-Llauro C."/>
            <person name="Purnelle B."/>
            <person name="Masuy D."/>
            <person name="de Haan M."/>
            <person name="Maarse A.C."/>
            <person name="Alcaraz J.-P."/>
            <person name="Cottet A."/>
            <person name="Casacuberta E."/>
            <person name="Monfort A."/>
            <person name="Argiriou A."/>
            <person name="Flores M."/>
            <person name="Liguori R."/>
            <person name="Vitale D."/>
            <person name="Mannhaupt G."/>
            <person name="Haase D."/>
            <person name="Schoof H."/>
            <person name="Rudd S."/>
            <person name="Zaccaria P."/>
            <person name="Mewes H.-W."/>
            <person name="Mayer K.F.X."/>
            <person name="Kaul S."/>
            <person name="Town C.D."/>
            <person name="Koo H.L."/>
            <person name="Tallon L.J."/>
            <person name="Jenkins J."/>
            <person name="Rooney T."/>
            <person name="Rizzo M."/>
            <person name="Walts A."/>
            <person name="Utterback T."/>
            <person name="Fujii C.Y."/>
            <person name="Shea T.P."/>
            <person name="Creasy T.H."/>
            <person name="Haas B."/>
            <person name="Maiti R."/>
            <person name="Wu D."/>
            <person name="Peterson J."/>
            <person name="Van Aken S."/>
            <person name="Pai G."/>
            <person name="Militscher J."/>
            <person name="Sellers P."/>
            <person name="Gill J.E."/>
            <person name="Feldblyum T.V."/>
            <person name="Preuss D."/>
            <person name="Lin X."/>
            <person name="Nierman W.C."/>
            <person name="Salzberg S.L."/>
            <person name="White O."/>
            <person name="Venter J.C."/>
            <person name="Fraser C.M."/>
            <person name="Kaneko T."/>
            <person name="Nakamura Y."/>
            <person name="Sato S."/>
            <person name="Kato T."/>
            <person name="Asamizu E."/>
            <person name="Sasamoto S."/>
            <person name="Kimura T."/>
            <person name="Idesawa K."/>
            <person name="Kawashima K."/>
            <person name="Kishida Y."/>
            <person name="Kiyokawa C."/>
            <person name="Kohara M."/>
            <person name="Matsumoto M."/>
            <person name="Matsuno A."/>
            <person name="Muraki A."/>
            <person name="Nakayama S."/>
            <person name="Nakazaki N."/>
            <person name="Shinpo S."/>
            <person name="Takeuchi C."/>
            <person name="Wada T."/>
            <person name="Watanabe A."/>
            <person name="Yamada M."/>
            <person name="Yasuda M."/>
            <person name="Tabata S."/>
        </authorList>
    </citation>
    <scope>NUCLEOTIDE SEQUENCE [LARGE SCALE GENOMIC DNA]</scope>
    <source>
        <strain>cv. Columbia</strain>
    </source>
</reference>
<reference key="2">
    <citation type="journal article" date="2017" name="Plant J.">
        <title>Araport11: a complete reannotation of the Arabidopsis thaliana reference genome.</title>
        <authorList>
            <person name="Cheng C.Y."/>
            <person name="Krishnakumar V."/>
            <person name="Chan A.P."/>
            <person name="Thibaud-Nissen F."/>
            <person name="Schobel S."/>
            <person name="Town C.D."/>
        </authorList>
    </citation>
    <scope>GENOME REANNOTATION</scope>
    <source>
        <strain>cv. Columbia</strain>
    </source>
</reference>
<reference key="3">
    <citation type="journal article" date="2003" name="Science">
        <title>Empirical analysis of transcriptional activity in the Arabidopsis genome.</title>
        <authorList>
            <person name="Yamada K."/>
            <person name="Lim J."/>
            <person name="Dale J.M."/>
            <person name="Chen H."/>
            <person name="Shinn P."/>
            <person name="Palm C.J."/>
            <person name="Southwick A.M."/>
            <person name="Wu H.C."/>
            <person name="Kim C.J."/>
            <person name="Nguyen M."/>
            <person name="Pham P.K."/>
            <person name="Cheuk R.F."/>
            <person name="Karlin-Newmann G."/>
            <person name="Liu S.X."/>
            <person name="Lam B."/>
            <person name="Sakano H."/>
            <person name="Wu T."/>
            <person name="Yu G."/>
            <person name="Miranda M."/>
            <person name="Quach H.L."/>
            <person name="Tripp M."/>
            <person name="Chang C.H."/>
            <person name="Lee J.M."/>
            <person name="Toriumi M.J."/>
            <person name="Chan M.M."/>
            <person name="Tang C.C."/>
            <person name="Onodera C.S."/>
            <person name="Deng J.M."/>
            <person name="Akiyama K."/>
            <person name="Ansari Y."/>
            <person name="Arakawa T."/>
            <person name="Banh J."/>
            <person name="Banno F."/>
            <person name="Bowser L."/>
            <person name="Brooks S.Y."/>
            <person name="Carninci P."/>
            <person name="Chao Q."/>
            <person name="Choy N."/>
            <person name="Enju A."/>
            <person name="Goldsmith A.D."/>
            <person name="Gurjal M."/>
            <person name="Hansen N.F."/>
            <person name="Hayashizaki Y."/>
            <person name="Johnson-Hopson C."/>
            <person name="Hsuan V.W."/>
            <person name="Iida K."/>
            <person name="Karnes M."/>
            <person name="Khan S."/>
            <person name="Koesema E."/>
            <person name="Ishida J."/>
            <person name="Jiang P.X."/>
            <person name="Jones T."/>
            <person name="Kawai J."/>
            <person name="Kamiya A."/>
            <person name="Meyers C."/>
            <person name="Nakajima M."/>
            <person name="Narusaka M."/>
            <person name="Seki M."/>
            <person name="Sakurai T."/>
            <person name="Satou M."/>
            <person name="Tamse R."/>
            <person name="Vaysberg M."/>
            <person name="Wallender E.K."/>
            <person name="Wong C."/>
            <person name="Yamamura Y."/>
            <person name="Yuan S."/>
            <person name="Shinozaki K."/>
            <person name="Davis R.W."/>
            <person name="Theologis A."/>
            <person name="Ecker J.R."/>
        </authorList>
    </citation>
    <scope>NUCLEOTIDE SEQUENCE [LARGE SCALE MRNA] (ISOFORM 2)</scope>
    <source>
        <strain>cv. Columbia</strain>
    </source>
</reference>
<reference key="4">
    <citation type="submission" date="2006-07" db="EMBL/GenBank/DDBJ databases">
        <title>Large-scale analysis of RIKEN Arabidopsis full-length (RAFL) cDNAs.</title>
        <authorList>
            <person name="Totoki Y."/>
            <person name="Seki M."/>
            <person name="Ishida J."/>
            <person name="Nakajima M."/>
            <person name="Enju A."/>
            <person name="Kamiya A."/>
            <person name="Narusaka M."/>
            <person name="Shin-i T."/>
            <person name="Nakagawa M."/>
            <person name="Sakamoto N."/>
            <person name="Oishi K."/>
            <person name="Kohara Y."/>
            <person name="Kobayashi M."/>
            <person name="Toyoda A."/>
            <person name="Sakaki Y."/>
            <person name="Sakurai T."/>
            <person name="Iida K."/>
            <person name="Akiyama K."/>
            <person name="Satou M."/>
            <person name="Toyoda T."/>
            <person name="Konagaya A."/>
            <person name="Carninci P."/>
            <person name="Kawai J."/>
            <person name="Hayashizaki Y."/>
            <person name="Shinozaki K."/>
        </authorList>
    </citation>
    <scope>NUCLEOTIDE SEQUENCE [LARGE SCALE MRNA] (ISOFORM 1)</scope>
    <source>
        <strain>cv. Columbia</strain>
    </source>
</reference>
<reference key="5">
    <citation type="journal article" date="2001" name="BMC Genomics">
        <title>Kinesins in the Arabidopsis genome: a comparative analysis among eukaryotes.</title>
        <authorList>
            <person name="Reddy A.S."/>
            <person name="Day I.S."/>
        </authorList>
    </citation>
    <scope>GENE FAMILY</scope>
</reference>
<reference key="6">
    <citation type="journal article" date="2006" name="BMC Genomics">
        <title>Comprehensive comparative analysis of kinesins in photosynthetic eukaryotes.</title>
        <authorList>
            <person name="Richardson D.N."/>
            <person name="Simmons M.P."/>
            <person name="Reddy A.S."/>
        </authorList>
    </citation>
    <scope>GENE FAMILY</scope>
    <scope>NOMENCLATURE</scope>
</reference>
<reference key="7">
    <citation type="journal article" date="2012" name="Protoplasma">
        <title>Functions of the Arabidopsis kinesin superfamily of microtubule-based motor proteins.</title>
        <authorList>
            <person name="Zhu C."/>
            <person name="Dixit R."/>
        </authorList>
    </citation>
    <scope>REVIEW</scope>
</reference>
<keyword id="KW-0025">Alternative splicing</keyword>
<keyword id="KW-0067">ATP-binding</keyword>
<keyword id="KW-0175">Coiled coil</keyword>
<keyword id="KW-0493">Microtubule</keyword>
<keyword id="KW-0505">Motor protein</keyword>
<keyword id="KW-0547">Nucleotide-binding</keyword>
<keyword id="KW-1185">Reference proteome</keyword>
<name>KN8B_ARATH</name>
<protein>
    <recommendedName>
        <fullName evidence="5">Kinesin-like protein KIN-8B</fullName>
    </recommendedName>
</protein>
<feature type="chain" id="PRO_0000437029" description="Kinesin-like protein KIN-8B">
    <location>
        <begin position="1"/>
        <end position="813"/>
    </location>
</feature>
<feature type="domain" description="Kinesin motor" evidence="2">
    <location>
        <begin position="14"/>
        <end position="345"/>
    </location>
</feature>
<feature type="region of interest" description="Disordered" evidence="3">
    <location>
        <begin position="664"/>
        <end position="694"/>
    </location>
</feature>
<feature type="region of interest" description="Disordered" evidence="3">
    <location>
        <begin position="756"/>
        <end position="813"/>
    </location>
</feature>
<feature type="coiled-coil region" evidence="1">
    <location>
        <begin position="349"/>
        <end position="391"/>
    </location>
</feature>
<feature type="compositionally biased region" description="Polar residues" evidence="3">
    <location>
        <begin position="682"/>
        <end position="694"/>
    </location>
</feature>
<feature type="compositionally biased region" description="Polar residues" evidence="3">
    <location>
        <begin position="761"/>
        <end position="791"/>
    </location>
</feature>
<feature type="compositionally biased region" description="Polar residues" evidence="3">
    <location>
        <begin position="804"/>
        <end position="813"/>
    </location>
</feature>
<feature type="binding site" evidence="2">
    <location>
        <begin position="104"/>
        <end position="111"/>
    </location>
    <ligand>
        <name>ATP</name>
        <dbReference type="ChEBI" id="CHEBI:30616"/>
    </ligand>
</feature>
<feature type="splice variant" id="VSP_058481" description="In isoform 2.">
    <original>SE</original>
    <variation>VS</variation>
    <location>
        <begin position="372"/>
        <end position="373"/>
    </location>
</feature>
<feature type="splice variant" id="VSP_058482" description="In isoform 2.">
    <location>
        <begin position="374"/>
        <end position="813"/>
    </location>
</feature>
<feature type="sequence conflict" description="In Ref. 4; BAF00840." evidence="5" ref="4">
    <original>L</original>
    <variation>P</variation>
    <location>
        <position position="467"/>
    </location>
</feature>
<dbReference type="EMBL" id="AL132964">
    <property type="protein sequence ID" value="CAB62469.1"/>
    <property type="molecule type" value="Genomic_DNA"/>
</dbReference>
<dbReference type="EMBL" id="CP002686">
    <property type="protein sequence ID" value="AEE78572.1"/>
    <property type="molecule type" value="Genomic_DNA"/>
</dbReference>
<dbReference type="EMBL" id="AY120758">
    <property type="protein sequence ID" value="AAM53316.1"/>
    <property type="molecule type" value="mRNA"/>
</dbReference>
<dbReference type="EMBL" id="BT008457">
    <property type="protein sequence ID" value="AAP37816.1"/>
    <property type="molecule type" value="mRNA"/>
</dbReference>
<dbReference type="EMBL" id="AK228951">
    <property type="protein sequence ID" value="BAF00840.1"/>
    <property type="molecule type" value="mRNA"/>
</dbReference>
<dbReference type="PIR" id="T46242">
    <property type="entry name" value="T46242"/>
</dbReference>
<dbReference type="RefSeq" id="NP_190534.1">
    <molecule id="Q9SCJ4-1"/>
    <property type="nucleotide sequence ID" value="NM_114825.3"/>
</dbReference>
<dbReference type="SMR" id="Q9SCJ4"/>
<dbReference type="FunCoup" id="Q9SCJ4">
    <property type="interactions" value="135"/>
</dbReference>
<dbReference type="STRING" id="3702.Q9SCJ4"/>
<dbReference type="GlyGen" id="Q9SCJ4">
    <property type="glycosylation" value="2 sites"/>
</dbReference>
<dbReference type="iPTMnet" id="Q9SCJ4"/>
<dbReference type="PaxDb" id="3702-AT3G49650.1"/>
<dbReference type="ProteomicsDB" id="237099">
    <molecule id="Q9SCJ4-1"/>
</dbReference>
<dbReference type="EnsemblPlants" id="AT3G49650.1">
    <molecule id="Q9SCJ4-1"/>
    <property type="protein sequence ID" value="AT3G49650.1"/>
    <property type="gene ID" value="AT3G49650"/>
</dbReference>
<dbReference type="GeneID" id="824127"/>
<dbReference type="Gramene" id="AT3G49650.1">
    <molecule id="Q9SCJ4-1"/>
    <property type="protein sequence ID" value="AT3G49650.1"/>
    <property type="gene ID" value="AT3G49650"/>
</dbReference>
<dbReference type="KEGG" id="ath:AT3G49650"/>
<dbReference type="Araport" id="AT3G49650"/>
<dbReference type="TAIR" id="AT3G49650"/>
<dbReference type="eggNOG" id="KOG0242">
    <property type="taxonomic scope" value="Eukaryota"/>
</dbReference>
<dbReference type="HOGENOM" id="CLU_001485_2_10_1"/>
<dbReference type="InParanoid" id="Q9SCJ4"/>
<dbReference type="OMA" id="MMSECSP"/>
<dbReference type="PhylomeDB" id="Q9SCJ4"/>
<dbReference type="PRO" id="PR:Q9SCJ4"/>
<dbReference type="Proteomes" id="UP000006548">
    <property type="component" value="Chromosome 3"/>
</dbReference>
<dbReference type="ExpressionAtlas" id="Q9SCJ4">
    <property type="expression patterns" value="baseline and differential"/>
</dbReference>
<dbReference type="GO" id="GO:0005874">
    <property type="term" value="C:microtubule"/>
    <property type="evidence" value="ECO:0007669"/>
    <property type="project" value="UniProtKB-KW"/>
</dbReference>
<dbReference type="GO" id="GO:0005524">
    <property type="term" value="F:ATP binding"/>
    <property type="evidence" value="ECO:0007669"/>
    <property type="project" value="UniProtKB-KW"/>
</dbReference>
<dbReference type="GO" id="GO:0008017">
    <property type="term" value="F:microtubule binding"/>
    <property type="evidence" value="ECO:0007669"/>
    <property type="project" value="InterPro"/>
</dbReference>
<dbReference type="GO" id="GO:0003777">
    <property type="term" value="F:microtubule motor activity"/>
    <property type="evidence" value="ECO:0007669"/>
    <property type="project" value="InterPro"/>
</dbReference>
<dbReference type="GO" id="GO:0007018">
    <property type="term" value="P:microtubule-based movement"/>
    <property type="evidence" value="ECO:0007669"/>
    <property type="project" value="InterPro"/>
</dbReference>
<dbReference type="CDD" id="cd01370">
    <property type="entry name" value="KISc_KIP3_like"/>
    <property type="match status" value="1"/>
</dbReference>
<dbReference type="FunFam" id="3.40.850.10:FF:000056">
    <property type="entry name" value="Kinesin-like protein"/>
    <property type="match status" value="1"/>
</dbReference>
<dbReference type="Gene3D" id="3.40.850.10">
    <property type="entry name" value="Kinesin motor domain"/>
    <property type="match status" value="1"/>
</dbReference>
<dbReference type="InterPro" id="IPR027640">
    <property type="entry name" value="Kinesin-like_fam"/>
</dbReference>
<dbReference type="InterPro" id="IPR019821">
    <property type="entry name" value="Kinesin_motor_CS"/>
</dbReference>
<dbReference type="InterPro" id="IPR001752">
    <property type="entry name" value="Kinesin_motor_dom"/>
</dbReference>
<dbReference type="InterPro" id="IPR036961">
    <property type="entry name" value="Kinesin_motor_dom_sf"/>
</dbReference>
<dbReference type="InterPro" id="IPR027417">
    <property type="entry name" value="P-loop_NTPase"/>
</dbReference>
<dbReference type="PANTHER" id="PTHR47968">
    <property type="entry name" value="CENTROMERE PROTEIN E"/>
    <property type="match status" value="1"/>
</dbReference>
<dbReference type="PANTHER" id="PTHR47968:SF29">
    <property type="entry name" value="KINESIN-LIKE PROTEIN"/>
    <property type="match status" value="1"/>
</dbReference>
<dbReference type="Pfam" id="PF00225">
    <property type="entry name" value="Kinesin"/>
    <property type="match status" value="1"/>
</dbReference>
<dbReference type="PRINTS" id="PR00380">
    <property type="entry name" value="KINESINHEAVY"/>
</dbReference>
<dbReference type="SMART" id="SM00129">
    <property type="entry name" value="KISc"/>
    <property type="match status" value="1"/>
</dbReference>
<dbReference type="SUPFAM" id="SSF52540">
    <property type="entry name" value="P-loop containing nucleoside triphosphate hydrolases"/>
    <property type="match status" value="1"/>
</dbReference>
<dbReference type="PROSITE" id="PS00411">
    <property type="entry name" value="KINESIN_MOTOR_1"/>
    <property type="match status" value="1"/>
</dbReference>
<dbReference type="PROSITE" id="PS50067">
    <property type="entry name" value="KINESIN_MOTOR_2"/>
    <property type="match status" value="1"/>
</dbReference>
<accession>Q9SCJ4</accession>
<accession>Q0WPV9</accession>
<accession>Q8L841</accession>
<organism>
    <name type="scientific">Arabidopsis thaliana</name>
    <name type="common">Mouse-ear cress</name>
    <dbReference type="NCBI Taxonomy" id="3702"/>
    <lineage>
        <taxon>Eukaryota</taxon>
        <taxon>Viridiplantae</taxon>
        <taxon>Streptophyta</taxon>
        <taxon>Embryophyta</taxon>
        <taxon>Tracheophyta</taxon>
        <taxon>Spermatophyta</taxon>
        <taxon>Magnoliopsida</taxon>
        <taxon>eudicotyledons</taxon>
        <taxon>Gunneridae</taxon>
        <taxon>Pentapetalae</taxon>
        <taxon>rosids</taxon>
        <taxon>malvids</taxon>
        <taxon>Brassicales</taxon>
        <taxon>Brassicaceae</taxon>
        <taxon>Camelineae</taxon>
        <taxon>Arabidopsis</taxon>
    </lineage>
</organism>
<proteinExistence type="evidence at transcript level"/>
<evidence type="ECO:0000255" key="1"/>
<evidence type="ECO:0000255" key="2">
    <source>
        <dbReference type="PROSITE-ProRule" id="PRU00283"/>
    </source>
</evidence>
<evidence type="ECO:0000256" key="3">
    <source>
        <dbReference type="SAM" id="MobiDB-lite"/>
    </source>
</evidence>
<evidence type="ECO:0000303" key="4">
    <source>
    </source>
</evidence>
<evidence type="ECO:0000305" key="5"/>
<evidence type="ECO:0000312" key="6">
    <source>
        <dbReference type="Araport" id="AT3G49650"/>
    </source>
</evidence>
<evidence type="ECO:0000312" key="7">
    <source>
        <dbReference type="EMBL" id="CAB62469.1"/>
    </source>
</evidence>
<sequence>MPSIRAPAAKKTTTLTVAVKCRPLMEKERGRDIVRVNNSKEVVVLDPDLSKDYLDRIQNRTKEKKYCFDHAFGPESTNKNVYRSMSSVISSVVHGLNATVFAYGSTGSGKTYTMVGTRSDPGLMVLSLNTIFDMIKSDKSSDEFEVTCSYLEVYNEVIYDLLEKSSGHLELREDPEQGIVVAGLRSIKVHSADRILELLNLGNSRRKTESTEMNGTSSRSHAVLEIAVKRRQKNQNQVMRGKLALVDLAGSERAAETNNGGQKLRDGANINRSLLALANCINALGKQHKKGLAYVPYRNSKLTRILKDGLSGNSQTVMVATISPADSQYHHTVNTLKYADRAKEIKTHIQKNIGTIDTHMSDYQRMIDNLQSEVSQLKTQLAEKESQLSIKPFERGVERELSWLDGLSHQISENVQDRINLQKALFELEETNLRNRTELQHLDDAIAKQATEKDVVEALSSRRQVILDNIRDNDEAGVNYQRDIEENEKHRCELQDMLNEAINNNGNKTYLHILNQYKLLGMGNTELQFEMAMRDQIIYNQREAQRNLWNLLMGLGVEEKQVFDLAAKQGITIEDWSSIALFPGLPYRKQTPSFIPANIPFVGHSYSKSSCTFQSYQDPSSKGQQWAPTPTLCREEHHSSYYFMRQEPPAFVNLRKSHDGWVGGSRPASRIDTGGNHRRVSYPQTVNNSSPRMASGPTFYQTPQREMLLNTTSPYSSPRVGLINGATTPSVQPFYGSPRAVTVRNGSYNTPLAPAAVSTKGARNQQRVFGTSPLSGTKGVKNSSYGQNSHTKLYRGGGTKGHSKGNNTQRQHQ</sequence>
<gene>
    <name evidence="5" type="primary">KIN8B</name>
    <name evidence="6" type="ordered locus">At3g49650</name>
    <name evidence="7" type="ORF">T9C5.240</name>
</gene>
<comment type="alternative products">
    <event type="alternative splicing"/>
    <isoform>
        <id>Q9SCJ4-1</id>
        <name>1</name>
        <sequence type="displayed"/>
    </isoform>
    <isoform>
        <id>Q9SCJ4-2</id>
        <name>2</name>
        <sequence type="described" ref="VSP_058481 VSP_058482"/>
    </isoform>
</comment>
<comment type="miscellaneous">
    <molecule>Isoform 2</molecule>
    <text evidence="5">May be due to intron retention.</text>
</comment>
<comment type="similarity">
    <text evidence="4">Belongs to the TRAFAC class myosin-kinesin ATPase superfamily. Kinesin family. KIN-8 subfamily.</text>
</comment>